<gene>
    <name evidence="1" type="primary">rplM</name>
    <name type="ordered locus">Cphy_3628</name>
</gene>
<name>RL13_LACP7</name>
<evidence type="ECO:0000255" key="1">
    <source>
        <dbReference type="HAMAP-Rule" id="MF_01366"/>
    </source>
</evidence>
<evidence type="ECO:0000305" key="2"/>
<comment type="function">
    <text evidence="1">This protein is one of the early assembly proteins of the 50S ribosomal subunit, although it is not seen to bind rRNA by itself. It is important during the early stages of 50S assembly.</text>
</comment>
<comment type="subunit">
    <text evidence="1">Part of the 50S ribosomal subunit.</text>
</comment>
<comment type="similarity">
    <text evidence="1">Belongs to the universal ribosomal protein uL13 family.</text>
</comment>
<keyword id="KW-1185">Reference proteome</keyword>
<keyword id="KW-0687">Ribonucleoprotein</keyword>
<keyword id="KW-0689">Ribosomal protein</keyword>
<sequence>MKSFMASPATIERKWYVVDATGHTLGRLSSEIAKVLRGKNKAIYTPHIDTGDYVIVVNADKIKVTGKKMDQKIYFSHSDYPGGVRETTLKEMLAKKPEDVITLAVKGMLPKGPLGRSMLNKLHVYAGPEHNNAAQKPEVLEIKY</sequence>
<proteinExistence type="inferred from homology"/>
<protein>
    <recommendedName>
        <fullName evidence="1">Large ribosomal subunit protein uL13</fullName>
    </recommendedName>
    <alternativeName>
        <fullName evidence="2">50S ribosomal protein L13</fullName>
    </alternativeName>
</protein>
<accession>A9KJF5</accession>
<organism>
    <name type="scientific">Lachnoclostridium phytofermentans (strain ATCC 700394 / DSM 18823 / ISDg)</name>
    <name type="common">Clostridium phytofermentans</name>
    <dbReference type="NCBI Taxonomy" id="357809"/>
    <lineage>
        <taxon>Bacteria</taxon>
        <taxon>Bacillati</taxon>
        <taxon>Bacillota</taxon>
        <taxon>Clostridia</taxon>
        <taxon>Lachnospirales</taxon>
        <taxon>Lachnospiraceae</taxon>
    </lineage>
</organism>
<dbReference type="EMBL" id="CP000885">
    <property type="protein sequence ID" value="ABX43975.1"/>
    <property type="molecule type" value="Genomic_DNA"/>
</dbReference>
<dbReference type="RefSeq" id="WP_012201623.1">
    <property type="nucleotide sequence ID" value="NC_010001.1"/>
</dbReference>
<dbReference type="SMR" id="A9KJF5"/>
<dbReference type="STRING" id="357809.Cphy_3628"/>
<dbReference type="KEGG" id="cpy:Cphy_3628"/>
<dbReference type="eggNOG" id="COG0102">
    <property type="taxonomic scope" value="Bacteria"/>
</dbReference>
<dbReference type="HOGENOM" id="CLU_082184_2_2_9"/>
<dbReference type="OrthoDB" id="9801330at2"/>
<dbReference type="Proteomes" id="UP000000370">
    <property type="component" value="Chromosome"/>
</dbReference>
<dbReference type="GO" id="GO:0022625">
    <property type="term" value="C:cytosolic large ribosomal subunit"/>
    <property type="evidence" value="ECO:0007669"/>
    <property type="project" value="TreeGrafter"/>
</dbReference>
<dbReference type="GO" id="GO:0003729">
    <property type="term" value="F:mRNA binding"/>
    <property type="evidence" value="ECO:0007669"/>
    <property type="project" value="TreeGrafter"/>
</dbReference>
<dbReference type="GO" id="GO:0003735">
    <property type="term" value="F:structural constituent of ribosome"/>
    <property type="evidence" value="ECO:0007669"/>
    <property type="project" value="InterPro"/>
</dbReference>
<dbReference type="GO" id="GO:0017148">
    <property type="term" value="P:negative regulation of translation"/>
    <property type="evidence" value="ECO:0007669"/>
    <property type="project" value="TreeGrafter"/>
</dbReference>
<dbReference type="GO" id="GO:0006412">
    <property type="term" value="P:translation"/>
    <property type="evidence" value="ECO:0007669"/>
    <property type="project" value="UniProtKB-UniRule"/>
</dbReference>
<dbReference type="CDD" id="cd00392">
    <property type="entry name" value="Ribosomal_L13"/>
    <property type="match status" value="1"/>
</dbReference>
<dbReference type="FunFam" id="3.90.1180.10:FF:000001">
    <property type="entry name" value="50S ribosomal protein L13"/>
    <property type="match status" value="1"/>
</dbReference>
<dbReference type="Gene3D" id="3.90.1180.10">
    <property type="entry name" value="Ribosomal protein L13"/>
    <property type="match status" value="1"/>
</dbReference>
<dbReference type="HAMAP" id="MF_01366">
    <property type="entry name" value="Ribosomal_uL13"/>
    <property type="match status" value="1"/>
</dbReference>
<dbReference type="InterPro" id="IPR005822">
    <property type="entry name" value="Ribosomal_uL13"/>
</dbReference>
<dbReference type="InterPro" id="IPR005823">
    <property type="entry name" value="Ribosomal_uL13_bac-type"/>
</dbReference>
<dbReference type="InterPro" id="IPR023563">
    <property type="entry name" value="Ribosomal_uL13_CS"/>
</dbReference>
<dbReference type="InterPro" id="IPR036899">
    <property type="entry name" value="Ribosomal_uL13_sf"/>
</dbReference>
<dbReference type="NCBIfam" id="TIGR01066">
    <property type="entry name" value="rplM_bact"/>
    <property type="match status" value="1"/>
</dbReference>
<dbReference type="PANTHER" id="PTHR11545:SF2">
    <property type="entry name" value="LARGE RIBOSOMAL SUBUNIT PROTEIN UL13M"/>
    <property type="match status" value="1"/>
</dbReference>
<dbReference type="PANTHER" id="PTHR11545">
    <property type="entry name" value="RIBOSOMAL PROTEIN L13"/>
    <property type="match status" value="1"/>
</dbReference>
<dbReference type="Pfam" id="PF00572">
    <property type="entry name" value="Ribosomal_L13"/>
    <property type="match status" value="1"/>
</dbReference>
<dbReference type="PIRSF" id="PIRSF002181">
    <property type="entry name" value="Ribosomal_L13"/>
    <property type="match status" value="1"/>
</dbReference>
<dbReference type="SUPFAM" id="SSF52161">
    <property type="entry name" value="Ribosomal protein L13"/>
    <property type="match status" value="1"/>
</dbReference>
<dbReference type="PROSITE" id="PS00783">
    <property type="entry name" value="RIBOSOMAL_L13"/>
    <property type="match status" value="1"/>
</dbReference>
<feature type="chain" id="PRO_1000087082" description="Large ribosomal subunit protein uL13">
    <location>
        <begin position="1"/>
        <end position="144"/>
    </location>
</feature>
<reference key="1">
    <citation type="submission" date="2007-11" db="EMBL/GenBank/DDBJ databases">
        <title>Complete genome sequence of Clostridium phytofermentans ISDg.</title>
        <authorList>
            <person name="Leschine S.B."/>
            <person name="Warnick T.A."/>
            <person name="Blanchard J.L."/>
            <person name="Schnell D.J."/>
            <person name="Petit E.L."/>
            <person name="LaTouf W.G."/>
            <person name="Copeland A."/>
            <person name="Lucas S."/>
            <person name="Lapidus A."/>
            <person name="Barry K."/>
            <person name="Glavina del Rio T."/>
            <person name="Dalin E."/>
            <person name="Tice H."/>
            <person name="Pitluck S."/>
            <person name="Kiss H."/>
            <person name="Brettin T."/>
            <person name="Bruce D."/>
            <person name="Detter J.C."/>
            <person name="Han C."/>
            <person name="Kuske C."/>
            <person name="Schmutz J."/>
            <person name="Larimer F."/>
            <person name="Land M."/>
            <person name="Hauser L."/>
            <person name="Kyrpides N."/>
            <person name="Kim E.A."/>
            <person name="Richardson P."/>
        </authorList>
    </citation>
    <scope>NUCLEOTIDE SEQUENCE [LARGE SCALE GENOMIC DNA]</scope>
    <source>
        <strain>ATCC 700394 / DSM 18823 / ISDg</strain>
    </source>
</reference>